<organism>
    <name type="scientific">Serratia proteamaculans (strain 568)</name>
    <dbReference type="NCBI Taxonomy" id="399741"/>
    <lineage>
        <taxon>Bacteria</taxon>
        <taxon>Pseudomonadati</taxon>
        <taxon>Pseudomonadota</taxon>
        <taxon>Gammaproteobacteria</taxon>
        <taxon>Enterobacterales</taxon>
        <taxon>Yersiniaceae</taxon>
        <taxon>Serratia</taxon>
    </lineage>
</organism>
<accession>A8G9P1</accession>
<dbReference type="EC" id="1.1.1.262" evidence="1"/>
<dbReference type="EMBL" id="CP000826">
    <property type="protein sequence ID" value="ABV39831.1"/>
    <property type="molecule type" value="Genomic_DNA"/>
</dbReference>
<dbReference type="SMR" id="A8G9P1"/>
<dbReference type="STRING" id="399741.Spro_0725"/>
<dbReference type="KEGG" id="spe:Spro_0725"/>
<dbReference type="eggNOG" id="COG1995">
    <property type="taxonomic scope" value="Bacteria"/>
</dbReference>
<dbReference type="HOGENOM" id="CLU_040168_0_0_6"/>
<dbReference type="OrthoDB" id="9801783at2"/>
<dbReference type="UniPathway" id="UPA00244">
    <property type="reaction ID" value="UER00312"/>
</dbReference>
<dbReference type="GO" id="GO:0005737">
    <property type="term" value="C:cytoplasm"/>
    <property type="evidence" value="ECO:0007669"/>
    <property type="project" value="UniProtKB-SubCell"/>
</dbReference>
<dbReference type="GO" id="GO:0050570">
    <property type="term" value="F:4-hydroxythreonine-4-phosphate dehydrogenase activity"/>
    <property type="evidence" value="ECO:0007669"/>
    <property type="project" value="UniProtKB-UniRule"/>
</dbReference>
<dbReference type="GO" id="GO:0050897">
    <property type="term" value="F:cobalt ion binding"/>
    <property type="evidence" value="ECO:0007669"/>
    <property type="project" value="UniProtKB-UniRule"/>
</dbReference>
<dbReference type="GO" id="GO:0000287">
    <property type="term" value="F:magnesium ion binding"/>
    <property type="evidence" value="ECO:0007669"/>
    <property type="project" value="UniProtKB-UniRule"/>
</dbReference>
<dbReference type="GO" id="GO:0051287">
    <property type="term" value="F:NAD binding"/>
    <property type="evidence" value="ECO:0007669"/>
    <property type="project" value="InterPro"/>
</dbReference>
<dbReference type="GO" id="GO:0008270">
    <property type="term" value="F:zinc ion binding"/>
    <property type="evidence" value="ECO:0007669"/>
    <property type="project" value="UniProtKB-UniRule"/>
</dbReference>
<dbReference type="GO" id="GO:0042823">
    <property type="term" value="P:pyridoxal phosphate biosynthetic process"/>
    <property type="evidence" value="ECO:0007669"/>
    <property type="project" value="UniProtKB-UniRule"/>
</dbReference>
<dbReference type="GO" id="GO:0008615">
    <property type="term" value="P:pyridoxine biosynthetic process"/>
    <property type="evidence" value="ECO:0007669"/>
    <property type="project" value="UniProtKB-UniRule"/>
</dbReference>
<dbReference type="Gene3D" id="3.40.718.10">
    <property type="entry name" value="Isopropylmalate Dehydrogenase"/>
    <property type="match status" value="1"/>
</dbReference>
<dbReference type="HAMAP" id="MF_00536">
    <property type="entry name" value="PdxA"/>
    <property type="match status" value="1"/>
</dbReference>
<dbReference type="InterPro" id="IPR037510">
    <property type="entry name" value="PdxA"/>
</dbReference>
<dbReference type="InterPro" id="IPR005255">
    <property type="entry name" value="PdxA_fam"/>
</dbReference>
<dbReference type="NCBIfam" id="TIGR00557">
    <property type="entry name" value="pdxA"/>
    <property type="match status" value="1"/>
</dbReference>
<dbReference type="PANTHER" id="PTHR30004">
    <property type="entry name" value="4-HYDROXYTHREONINE-4-PHOSPHATE DEHYDROGENASE"/>
    <property type="match status" value="1"/>
</dbReference>
<dbReference type="PANTHER" id="PTHR30004:SF5">
    <property type="entry name" value="4-HYDROXYTHREONINE-4-PHOSPHATE DEHYDROGENASE"/>
    <property type="match status" value="1"/>
</dbReference>
<dbReference type="Pfam" id="PF04166">
    <property type="entry name" value="PdxA"/>
    <property type="match status" value="1"/>
</dbReference>
<dbReference type="SUPFAM" id="SSF53659">
    <property type="entry name" value="Isocitrate/Isopropylmalate dehydrogenase-like"/>
    <property type="match status" value="1"/>
</dbReference>
<gene>
    <name evidence="1" type="primary">pdxA</name>
    <name type="ordered locus">Spro_0725</name>
</gene>
<proteinExistence type="inferred from homology"/>
<protein>
    <recommendedName>
        <fullName evidence="1">4-hydroxythreonine-4-phosphate dehydrogenase</fullName>
        <ecNumber evidence="1">1.1.1.262</ecNumber>
    </recommendedName>
    <alternativeName>
        <fullName evidence="1">4-(phosphohydroxy)-L-threonine dehydrogenase</fullName>
    </alternativeName>
</protein>
<reference key="1">
    <citation type="submission" date="2007-09" db="EMBL/GenBank/DDBJ databases">
        <title>Complete sequence of chromosome of Serratia proteamaculans 568.</title>
        <authorList>
            <consortium name="US DOE Joint Genome Institute"/>
            <person name="Copeland A."/>
            <person name="Lucas S."/>
            <person name="Lapidus A."/>
            <person name="Barry K."/>
            <person name="Glavina del Rio T."/>
            <person name="Dalin E."/>
            <person name="Tice H."/>
            <person name="Pitluck S."/>
            <person name="Chain P."/>
            <person name="Malfatti S."/>
            <person name="Shin M."/>
            <person name="Vergez L."/>
            <person name="Schmutz J."/>
            <person name="Larimer F."/>
            <person name="Land M."/>
            <person name="Hauser L."/>
            <person name="Kyrpides N."/>
            <person name="Kim E."/>
            <person name="Taghavi S."/>
            <person name="Newman L."/>
            <person name="Vangronsveld J."/>
            <person name="van der Lelie D."/>
            <person name="Richardson P."/>
        </authorList>
    </citation>
    <scope>NUCLEOTIDE SEQUENCE [LARGE SCALE GENOMIC DNA]</scope>
    <source>
        <strain>568</strain>
    </source>
</reference>
<keyword id="KW-0170">Cobalt</keyword>
<keyword id="KW-0963">Cytoplasm</keyword>
<keyword id="KW-0460">Magnesium</keyword>
<keyword id="KW-0479">Metal-binding</keyword>
<keyword id="KW-0520">NAD</keyword>
<keyword id="KW-0521">NADP</keyword>
<keyword id="KW-0560">Oxidoreductase</keyword>
<keyword id="KW-0664">Pyridoxine biosynthesis</keyword>
<keyword id="KW-0862">Zinc</keyword>
<name>PDXA_SERP5</name>
<feature type="chain" id="PRO_1000061033" description="4-hydroxythreonine-4-phosphate dehydrogenase">
    <location>
        <begin position="1"/>
        <end position="330"/>
    </location>
</feature>
<feature type="binding site" evidence="1">
    <location>
        <position position="136"/>
    </location>
    <ligand>
        <name>substrate</name>
    </ligand>
</feature>
<feature type="binding site" evidence="1">
    <location>
        <position position="137"/>
    </location>
    <ligand>
        <name>substrate</name>
    </ligand>
</feature>
<feature type="binding site" evidence="1">
    <location>
        <position position="166"/>
    </location>
    <ligand>
        <name>a divalent metal cation</name>
        <dbReference type="ChEBI" id="CHEBI:60240"/>
        <note>ligand shared between dimeric partners</note>
    </ligand>
</feature>
<feature type="binding site" evidence="1">
    <location>
        <position position="211"/>
    </location>
    <ligand>
        <name>a divalent metal cation</name>
        <dbReference type="ChEBI" id="CHEBI:60240"/>
        <note>ligand shared between dimeric partners</note>
    </ligand>
</feature>
<feature type="binding site" evidence="1">
    <location>
        <position position="266"/>
    </location>
    <ligand>
        <name>a divalent metal cation</name>
        <dbReference type="ChEBI" id="CHEBI:60240"/>
        <note>ligand shared between dimeric partners</note>
    </ligand>
</feature>
<feature type="binding site" evidence="1">
    <location>
        <position position="274"/>
    </location>
    <ligand>
        <name>substrate</name>
    </ligand>
</feature>
<feature type="binding site" evidence="1">
    <location>
        <position position="283"/>
    </location>
    <ligand>
        <name>substrate</name>
    </ligand>
</feature>
<feature type="binding site" evidence="1">
    <location>
        <position position="292"/>
    </location>
    <ligand>
        <name>substrate</name>
    </ligand>
</feature>
<sequence length="330" mass="35205">MHNNNRIVITPGEPAGVGPDLVAALAQQDWPVELVVCADPALLLERARQLDLPLQLRTYQPQQPAQPQRAGTLTVLPVATAHPVVAGELNVGNSAYVVETLARACDGCLNGEFAALITGPVNKGVINDAGVPFIGHTEFFADRSGCDRVVMMLATEELRVALATTHLPLLAVPGAITRQSLHEVIRILDHDLKTKFGLAQPQIYVCGLNPHAGEGGHMGREEIDTIIPALDELRAEGITLIGPLPADTLFQPKYLQHADAVLAMYHDQGLPVLKYQGFGRAVNITLGLPFIRTSVDHGTALELAGTGTADAGSFKTALNLAIKMIINCNE</sequence>
<evidence type="ECO:0000255" key="1">
    <source>
        <dbReference type="HAMAP-Rule" id="MF_00536"/>
    </source>
</evidence>
<comment type="function">
    <text evidence="1">Catalyzes the NAD(P)-dependent oxidation of 4-(phosphooxy)-L-threonine (HTP) into 2-amino-3-oxo-4-(phosphooxy)butyric acid which spontaneously decarboxylates to form 3-amino-2-oxopropyl phosphate (AHAP).</text>
</comment>
<comment type="catalytic activity">
    <reaction evidence="1">
        <text>4-(phosphooxy)-L-threonine + NAD(+) = 3-amino-2-oxopropyl phosphate + CO2 + NADH</text>
        <dbReference type="Rhea" id="RHEA:32275"/>
        <dbReference type="ChEBI" id="CHEBI:16526"/>
        <dbReference type="ChEBI" id="CHEBI:57279"/>
        <dbReference type="ChEBI" id="CHEBI:57540"/>
        <dbReference type="ChEBI" id="CHEBI:57945"/>
        <dbReference type="ChEBI" id="CHEBI:58452"/>
        <dbReference type="EC" id="1.1.1.262"/>
    </reaction>
</comment>
<comment type="cofactor">
    <cofactor evidence="1">
        <name>Zn(2+)</name>
        <dbReference type="ChEBI" id="CHEBI:29105"/>
    </cofactor>
    <cofactor evidence="1">
        <name>Mg(2+)</name>
        <dbReference type="ChEBI" id="CHEBI:18420"/>
    </cofactor>
    <cofactor evidence="1">
        <name>Co(2+)</name>
        <dbReference type="ChEBI" id="CHEBI:48828"/>
    </cofactor>
    <text evidence="1">Binds 1 divalent metal cation per subunit. Can use ions such as Zn(2+), Mg(2+) or Co(2+).</text>
</comment>
<comment type="pathway">
    <text evidence="1">Cofactor biosynthesis; pyridoxine 5'-phosphate biosynthesis; pyridoxine 5'-phosphate from D-erythrose 4-phosphate: step 4/5.</text>
</comment>
<comment type="subunit">
    <text evidence="1">Homodimer.</text>
</comment>
<comment type="subcellular location">
    <subcellularLocation>
        <location evidence="1">Cytoplasm</location>
    </subcellularLocation>
</comment>
<comment type="miscellaneous">
    <text evidence="1">The active site is located at the dimer interface.</text>
</comment>
<comment type="similarity">
    <text evidence="1">Belongs to the PdxA family.</text>
</comment>